<reference key="1">
    <citation type="journal article" date="2000" name="Science">
        <title>The genome sequence of Drosophila melanogaster.</title>
        <authorList>
            <person name="Adams M.D."/>
            <person name="Celniker S.E."/>
            <person name="Holt R.A."/>
            <person name="Evans C.A."/>
            <person name="Gocayne J.D."/>
            <person name="Amanatides P.G."/>
            <person name="Scherer S.E."/>
            <person name="Li P.W."/>
            <person name="Hoskins R.A."/>
            <person name="Galle R.F."/>
            <person name="George R.A."/>
            <person name="Lewis S.E."/>
            <person name="Richards S."/>
            <person name="Ashburner M."/>
            <person name="Henderson S.N."/>
            <person name="Sutton G.G."/>
            <person name="Wortman J.R."/>
            <person name="Yandell M.D."/>
            <person name="Zhang Q."/>
            <person name="Chen L.X."/>
            <person name="Brandon R.C."/>
            <person name="Rogers Y.-H.C."/>
            <person name="Blazej R.G."/>
            <person name="Champe M."/>
            <person name="Pfeiffer B.D."/>
            <person name="Wan K.H."/>
            <person name="Doyle C."/>
            <person name="Baxter E.G."/>
            <person name="Helt G."/>
            <person name="Nelson C.R."/>
            <person name="Miklos G.L.G."/>
            <person name="Abril J.F."/>
            <person name="Agbayani A."/>
            <person name="An H.-J."/>
            <person name="Andrews-Pfannkoch C."/>
            <person name="Baldwin D."/>
            <person name="Ballew R.M."/>
            <person name="Basu A."/>
            <person name="Baxendale J."/>
            <person name="Bayraktaroglu L."/>
            <person name="Beasley E.M."/>
            <person name="Beeson K.Y."/>
            <person name="Benos P.V."/>
            <person name="Berman B.P."/>
            <person name="Bhandari D."/>
            <person name="Bolshakov S."/>
            <person name="Borkova D."/>
            <person name="Botchan M.R."/>
            <person name="Bouck J."/>
            <person name="Brokstein P."/>
            <person name="Brottier P."/>
            <person name="Burtis K.C."/>
            <person name="Busam D.A."/>
            <person name="Butler H."/>
            <person name="Cadieu E."/>
            <person name="Center A."/>
            <person name="Chandra I."/>
            <person name="Cherry J.M."/>
            <person name="Cawley S."/>
            <person name="Dahlke C."/>
            <person name="Davenport L.B."/>
            <person name="Davies P."/>
            <person name="de Pablos B."/>
            <person name="Delcher A."/>
            <person name="Deng Z."/>
            <person name="Mays A.D."/>
            <person name="Dew I."/>
            <person name="Dietz S.M."/>
            <person name="Dodson K."/>
            <person name="Doup L.E."/>
            <person name="Downes M."/>
            <person name="Dugan-Rocha S."/>
            <person name="Dunkov B.C."/>
            <person name="Dunn P."/>
            <person name="Durbin K.J."/>
            <person name="Evangelista C.C."/>
            <person name="Ferraz C."/>
            <person name="Ferriera S."/>
            <person name="Fleischmann W."/>
            <person name="Fosler C."/>
            <person name="Gabrielian A.E."/>
            <person name="Garg N.S."/>
            <person name="Gelbart W.M."/>
            <person name="Glasser K."/>
            <person name="Glodek A."/>
            <person name="Gong F."/>
            <person name="Gorrell J.H."/>
            <person name="Gu Z."/>
            <person name="Guan P."/>
            <person name="Harris M."/>
            <person name="Harris N.L."/>
            <person name="Harvey D.A."/>
            <person name="Heiman T.J."/>
            <person name="Hernandez J.R."/>
            <person name="Houck J."/>
            <person name="Hostin D."/>
            <person name="Houston K.A."/>
            <person name="Howland T.J."/>
            <person name="Wei M.-H."/>
            <person name="Ibegwam C."/>
            <person name="Jalali M."/>
            <person name="Kalush F."/>
            <person name="Karpen G.H."/>
            <person name="Ke Z."/>
            <person name="Kennison J.A."/>
            <person name="Ketchum K.A."/>
            <person name="Kimmel B.E."/>
            <person name="Kodira C.D."/>
            <person name="Kraft C.L."/>
            <person name="Kravitz S."/>
            <person name="Kulp D."/>
            <person name="Lai Z."/>
            <person name="Lasko P."/>
            <person name="Lei Y."/>
            <person name="Levitsky A.A."/>
            <person name="Li J.H."/>
            <person name="Li Z."/>
            <person name="Liang Y."/>
            <person name="Lin X."/>
            <person name="Liu X."/>
            <person name="Mattei B."/>
            <person name="McIntosh T.C."/>
            <person name="McLeod M.P."/>
            <person name="McPherson D."/>
            <person name="Merkulov G."/>
            <person name="Milshina N.V."/>
            <person name="Mobarry C."/>
            <person name="Morris J."/>
            <person name="Moshrefi A."/>
            <person name="Mount S.M."/>
            <person name="Moy M."/>
            <person name="Murphy B."/>
            <person name="Murphy L."/>
            <person name="Muzny D.M."/>
            <person name="Nelson D.L."/>
            <person name="Nelson D.R."/>
            <person name="Nelson K.A."/>
            <person name="Nixon K."/>
            <person name="Nusskern D.R."/>
            <person name="Pacleb J.M."/>
            <person name="Palazzolo M."/>
            <person name="Pittman G.S."/>
            <person name="Pan S."/>
            <person name="Pollard J."/>
            <person name="Puri V."/>
            <person name="Reese M.G."/>
            <person name="Reinert K."/>
            <person name="Remington K."/>
            <person name="Saunders R.D.C."/>
            <person name="Scheeler F."/>
            <person name="Shen H."/>
            <person name="Shue B.C."/>
            <person name="Siden-Kiamos I."/>
            <person name="Simpson M."/>
            <person name="Skupski M.P."/>
            <person name="Smith T.J."/>
            <person name="Spier E."/>
            <person name="Spradling A.C."/>
            <person name="Stapleton M."/>
            <person name="Strong R."/>
            <person name="Sun E."/>
            <person name="Svirskas R."/>
            <person name="Tector C."/>
            <person name="Turner R."/>
            <person name="Venter E."/>
            <person name="Wang A.H."/>
            <person name="Wang X."/>
            <person name="Wang Z.-Y."/>
            <person name="Wassarman D.A."/>
            <person name="Weinstock G.M."/>
            <person name="Weissenbach J."/>
            <person name="Williams S.M."/>
            <person name="Woodage T."/>
            <person name="Worley K.C."/>
            <person name="Wu D."/>
            <person name="Yang S."/>
            <person name="Yao Q.A."/>
            <person name="Ye J."/>
            <person name="Yeh R.-F."/>
            <person name="Zaveri J.S."/>
            <person name="Zhan M."/>
            <person name="Zhang G."/>
            <person name="Zhao Q."/>
            <person name="Zheng L."/>
            <person name="Zheng X.H."/>
            <person name="Zhong F.N."/>
            <person name="Zhong W."/>
            <person name="Zhou X."/>
            <person name="Zhu S.C."/>
            <person name="Zhu X."/>
            <person name="Smith H.O."/>
            <person name="Gibbs R.A."/>
            <person name="Myers E.W."/>
            <person name="Rubin G.M."/>
            <person name="Venter J.C."/>
        </authorList>
    </citation>
    <scope>NUCLEOTIDE SEQUENCE [LARGE SCALE GENOMIC DNA]</scope>
    <source>
        <strain>Berkeley</strain>
    </source>
</reference>
<reference key="2">
    <citation type="journal article" date="2002" name="Genome Biol.">
        <title>Annotation of the Drosophila melanogaster euchromatic genome: a systematic review.</title>
        <authorList>
            <person name="Misra S."/>
            <person name="Crosby M.A."/>
            <person name="Mungall C.J."/>
            <person name="Matthews B.B."/>
            <person name="Campbell K.S."/>
            <person name="Hradecky P."/>
            <person name="Huang Y."/>
            <person name="Kaminker J.S."/>
            <person name="Millburn G.H."/>
            <person name="Prochnik S.E."/>
            <person name="Smith C.D."/>
            <person name="Tupy J.L."/>
            <person name="Whitfield E.J."/>
            <person name="Bayraktaroglu L."/>
            <person name="Berman B.P."/>
            <person name="Bettencourt B.R."/>
            <person name="Celniker S.E."/>
            <person name="de Grey A.D.N.J."/>
            <person name="Drysdale R.A."/>
            <person name="Harris N.L."/>
            <person name="Richter J."/>
            <person name="Russo S."/>
            <person name="Schroeder A.J."/>
            <person name="Shu S.Q."/>
            <person name="Stapleton M."/>
            <person name="Yamada C."/>
            <person name="Ashburner M."/>
            <person name="Gelbart W.M."/>
            <person name="Rubin G.M."/>
            <person name="Lewis S.E."/>
        </authorList>
    </citation>
    <scope>GENOME REANNOTATION</scope>
    <source>
        <strain>Berkeley</strain>
    </source>
</reference>
<reference key="3">
    <citation type="journal article" date="2002" name="Genome Biol.">
        <title>A Drosophila full-length cDNA resource.</title>
        <authorList>
            <person name="Stapleton M."/>
            <person name="Carlson J.W."/>
            <person name="Brokstein P."/>
            <person name="Yu C."/>
            <person name="Champe M."/>
            <person name="George R.A."/>
            <person name="Guarin H."/>
            <person name="Kronmiller B."/>
            <person name="Pacleb J.M."/>
            <person name="Park S."/>
            <person name="Wan K.H."/>
            <person name="Rubin G.M."/>
            <person name="Celniker S.E."/>
        </authorList>
    </citation>
    <scope>NUCLEOTIDE SEQUENCE [LARGE SCALE MRNA]</scope>
    <source>
        <strain>Berkeley</strain>
        <tissue>Embryo</tissue>
    </source>
</reference>
<reference key="4">
    <citation type="journal article" date="2008" name="J. Proteome Res.">
        <title>Phosphoproteome analysis of Drosophila melanogaster embryos.</title>
        <authorList>
            <person name="Zhai B."/>
            <person name="Villen J."/>
            <person name="Beausoleil S.A."/>
            <person name="Mintseris J."/>
            <person name="Gygi S.P."/>
        </authorList>
    </citation>
    <scope>PHOSPHORYLATION [LARGE SCALE ANALYSIS] AT SER-26; SER-28 AND SER-32</scope>
    <scope>IDENTIFICATION BY MASS SPECTROMETRY</scope>
    <source>
        <tissue>Embryo</tissue>
    </source>
</reference>
<feature type="chain" id="PRO_0000056620" description="Protein Aatf">
    <location>
        <begin position="1"/>
        <end position="488"/>
    </location>
</feature>
<feature type="region of interest" description="Disordered" evidence="2">
    <location>
        <begin position="71"/>
        <end position="206"/>
    </location>
</feature>
<feature type="region of interest" description="Disordered" evidence="2">
    <location>
        <begin position="290"/>
        <end position="309"/>
    </location>
</feature>
<feature type="compositionally biased region" description="Basic and acidic residues" evidence="2">
    <location>
        <begin position="71"/>
        <end position="85"/>
    </location>
</feature>
<feature type="compositionally biased region" description="Acidic residues" evidence="2">
    <location>
        <begin position="86"/>
        <end position="108"/>
    </location>
</feature>
<feature type="compositionally biased region" description="Basic and acidic residues" evidence="2">
    <location>
        <begin position="148"/>
        <end position="159"/>
    </location>
</feature>
<feature type="compositionally biased region" description="Acidic residues" evidence="2">
    <location>
        <begin position="160"/>
        <end position="193"/>
    </location>
</feature>
<feature type="modified residue" description="Phosphoserine" evidence="3">
    <location>
        <position position="26"/>
    </location>
</feature>
<feature type="modified residue" description="Phosphoserine" evidence="3">
    <location>
        <position position="28"/>
    </location>
</feature>
<feature type="modified residue" description="Phosphoserine" evidence="3">
    <location>
        <position position="32"/>
    </location>
</feature>
<gene>
    <name type="primary">Aatf</name>
    <name type="ORF">CG11188</name>
</gene>
<evidence type="ECO:0000250" key="1"/>
<evidence type="ECO:0000256" key="2">
    <source>
        <dbReference type="SAM" id="MobiDB-lite"/>
    </source>
</evidence>
<evidence type="ECO:0000269" key="3">
    <source>
    </source>
</evidence>
<evidence type="ECO:0000305" key="4"/>
<protein>
    <recommendedName>
        <fullName>Protein Aatf</fullName>
    </recommendedName>
    <alternativeName>
        <fullName>Apoptosis antagonizing transcription factor ortholog</fullName>
    </alternativeName>
</protein>
<sequence>MLRKSKKQPQTVAEKVSKLLAHPNESDSAEDSDFDVATGPRLVDFEEEEYDLPDARSTDFRKRNVKLLSEQSDRYKGKISSRKELDDDEDKDDEQEVSYEESDEDDENLTNFKQKLNAGGAEDSEEETAAGHSESGEESEEIESNLTDFKKKFEAGDFKYDDDEEEDDDSEEEDHSQESEGDDDDSEDDEAEDDAIKPSDVMSKTNHQAEIQKGLAVQNQLRIWERLLELRINTQKFTSKANQLPAPETLTKLASESDELQSVLNEAQERSSKLLQQLLSLQSALHQQYSEMKKSVKRKQPTEDSGPAVKKFGSVLQSNFQQMIGYRNEVLLKWDDRTKLLTPGAGVKRKSLQEDYDIIKKIGSALANREALVEKSQTPKNSQAEQQENTPVQRLKHIYDDSDFYHQQLRELIEYKASTSSNMSEITKQFVELQKLRQKMKKKVDTRASKGRKLRYVVHNKLINFMAPNESSDWTDASKSELYKSLFV</sequence>
<accession>Q9VM95</accession>
<comment type="function">
    <text evidence="1">May function as a general inhibitor of the histone deacetylase HDAC1.</text>
</comment>
<comment type="interaction">
    <interactant intactId="EBI-180131">
        <id>Q9VM95</id>
    </interactant>
    <interactant intactId="EBI-167222">
        <id>Q9V3P2</id>
        <label>l(2)34Fd</label>
    </interactant>
    <organismsDiffer>false</organismsDiffer>
    <experiments>2</experiments>
</comment>
<comment type="subcellular location">
    <subcellularLocation>
        <location evidence="1">Nucleus</location>
    </subcellularLocation>
</comment>
<comment type="similarity">
    <text evidence="4">Belongs to the AATF family.</text>
</comment>
<dbReference type="EMBL" id="AE014134">
    <property type="protein sequence ID" value="AAF52427.1"/>
    <property type="molecule type" value="Genomic_DNA"/>
</dbReference>
<dbReference type="EMBL" id="AY071275">
    <property type="protein sequence ID" value="AAL48897.1"/>
    <property type="molecule type" value="mRNA"/>
</dbReference>
<dbReference type="RefSeq" id="NP_609066.1">
    <property type="nucleotide sequence ID" value="NM_135222.3"/>
</dbReference>
<dbReference type="SMR" id="Q9VM95"/>
<dbReference type="BioGRID" id="60096">
    <property type="interactions" value="7"/>
</dbReference>
<dbReference type="FunCoup" id="Q9VM95">
    <property type="interactions" value="2167"/>
</dbReference>
<dbReference type="IntAct" id="Q9VM95">
    <property type="interactions" value="5"/>
</dbReference>
<dbReference type="STRING" id="7227.FBpp0078929"/>
<dbReference type="iPTMnet" id="Q9VM95"/>
<dbReference type="PaxDb" id="7227-FBpp0078929"/>
<dbReference type="DNASU" id="33943"/>
<dbReference type="EnsemblMetazoa" id="FBtr0079299">
    <property type="protein sequence ID" value="FBpp0078929"/>
    <property type="gene ID" value="FBgn0031851"/>
</dbReference>
<dbReference type="GeneID" id="33943"/>
<dbReference type="KEGG" id="dme:Dmel_CG11188"/>
<dbReference type="UCSC" id="CG11188-RA">
    <property type="organism name" value="d. melanogaster"/>
</dbReference>
<dbReference type="AGR" id="FB:FBgn0031851"/>
<dbReference type="CTD" id="26574"/>
<dbReference type="FlyBase" id="FBgn0031851">
    <property type="gene designation" value="Aatf"/>
</dbReference>
<dbReference type="VEuPathDB" id="VectorBase:FBgn0031851"/>
<dbReference type="eggNOG" id="KOG2773">
    <property type="taxonomic scope" value="Eukaryota"/>
</dbReference>
<dbReference type="GeneTree" id="ENSGT00940000170372"/>
<dbReference type="HOGENOM" id="CLU_018299_1_1_1"/>
<dbReference type="InParanoid" id="Q9VM95"/>
<dbReference type="OMA" id="INFMAPN"/>
<dbReference type="OrthoDB" id="5783963at2759"/>
<dbReference type="PhylomeDB" id="Q9VM95"/>
<dbReference type="BioGRID-ORCS" id="33943">
    <property type="hits" value="0 hits in 1 CRISPR screen"/>
</dbReference>
<dbReference type="GenomeRNAi" id="33943"/>
<dbReference type="PRO" id="PR:Q9VM95"/>
<dbReference type="Proteomes" id="UP000000803">
    <property type="component" value="Chromosome 2L"/>
</dbReference>
<dbReference type="Bgee" id="FBgn0031851">
    <property type="expression patterns" value="Expressed in posterior terminal follicle cell in ovary and 109 other cell types or tissues"/>
</dbReference>
<dbReference type="GO" id="GO:0005730">
    <property type="term" value="C:nucleolus"/>
    <property type="evidence" value="ECO:0000314"/>
    <property type="project" value="FlyBase"/>
</dbReference>
<dbReference type="GO" id="GO:0005634">
    <property type="term" value="C:nucleus"/>
    <property type="evidence" value="ECO:0000250"/>
    <property type="project" value="UniProtKB"/>
</dbReference>
<dbReference type="GO" id="GO:0043069">
    <property type="term" value="P:negative regulation of programmed cell death"/>
    <property type="evidence" value="ECO:0000315"/>
    <property type="project" value="FlyBase"/>
</dbReference>
<dbReference type="GO" id="GO:0048477">
    <property type="term" value="P:oogenesis"/>
    <property type="evidence" value="ECO:0000315"/>
    <property type="project" value="FlyBase"/>
</dbReference>
<dbReference type="InterPro" id="IPR025160">
    <property type="entry name" value="AATF"/>
</dbReference>
<dbReference type="InterPro" id="IPR039223">
    <property type="entry name" value="AATF/Bfr2"/>
</dbReference>
<dbReference type="InterPro" id="IPR012617">
    <property type="entry name" value="AATF_C"/>
</dbReference>
<dbReference type="PANTHER" id="PTHR15565">
    <property type="entry name" value="AATF PROTEIN APOPTOSIS ANTAGONIZING TRANSCRIPTION FACTOR"/>
    <property type="match status" value="1"/>
</dbReference>
<dbReference type="PANTHER" id="PTHR15565:SF0">
    <property type="entry name" value="PROTEIN AATF"/>
    <property type="match status" value="1"/>
</dbReference>
<dbReference type="Pfam" id="PF13339">
    <property type="entry name" value="AATF-Che1"/>
    <property type="match status" value="1"/>
</dbReference>
<dbReference type="Pfam" id="PF08164">
    <property type="entry name" value="TRAUB"/>
    <property type="match status" value="1"/>
</dbReference>
<name>AATF_DROME</name>
<proteinExistence type="evidence at protein level"/>
<keyword id="KW-0539">Nucleus</keyword>
<keyword id="KW-0597">Phosphoprotein</keyword>
<keyword id="KW-1185">Reference proteome</keyword>
<organism>
    <name type="scientific">Drosophila melanogaster</name>
    <name type="common">Fruit fly</name>
    <dbReference type="NCBI Taxonomy" id="7227"/>
    <lineage>
        <taxon>Eukaryota</taxon>
        <taxon>Metazoa</taxon>
        <taxon>Ecdysozoa</taxon>
        <taxon>Arthropoda</taxon>
        <taxon>Hexapoda</taxon>
        <taxon>Insecta</taxon>
        <taxon>Pterygota</taxon>
        <taxon>Neoptera</taxon>
        <taxon>Endopterygota</taxon>
        <taxon>Diptera</taxon>
        <taxon>Brachycera</taxon>
        <taxon>Muscomorpha</taxon>
        <taxon>Ephydroidea</taxon>
        <taxon>Drosophilidae</taxon>
        <taxon>Drosophila</taxon>
        <taxon>Sophophora</taxon>
    </lineage>
</organism>